<feature type="chain" id="PRO_1000144908" description="Iron-sulfur cluster insertion protein ErpA">
    <location>
        <begin position="1"/>
        <end position="114"/>
    </location>
</feature>
<feature type="binding site" evidence="1">
    <location>
        <position position="42"/>
    </location>
    <ligand>
        <name>iron-sulfur cluster</name>
        <dbReference type="ChEBI" id="CHEBI:30408"/>
    </ligand>
</feature>
<feature type="binding site" evidence="1">
    <location>
        <position position="106"/>
    </location>
    <ligand>
        <name>iron-sulfur cluster</name>
        <dbReference type="ChEBI" id="CHEBI:30408"/>
    </ligand>
</feature>
<feature type="binding site" evidence="1">
    <location>
        <position position="108"/>
    </location>
    <ligand>
        <name>iron-sulfur cluster</name>
        <dbReference type="ChEBI" id="CHEBI:30408"/>
    </ligand>
</feature>
<sequence>MSDDVALPLEFTDAAANKVKSLIADEDNPNLKLRVYITGGGCSGFQYGFTFDDQVNEGDMTIEKQGVGLVVDPMSLQYLVGGSVDYTEGLEGSRFIVTNPNAKSTCGCGSSFSI</sequence>
<dbReference type="EMBL" id="CP001164">
    <property type="protein sequence ID" value="ACI36823.1"/>
    <property type="molecule type" value="Genomic_DNA"/>
</dbReference>
<dbReference type="RefSeq" id="WP_001295564.1">
    <property type="nucleotide sequence ID" value="NC_011353.1"/>
</dbReference>
<dbReference type="SMR" id="B5Z0D6"/>
<dbReference type="GeneID" id="93777270"/>
<dbReference type="KEGG" id="ecf:ECH74115_0166"/>
<dbReference type="HOGENOM" id="CLU_069054_5_3_6"/>
<dbReference type="GO" id="GO:0005829">
    <property type="term" value="C:cytosol"/>
    <property type="evidence" value="ECO:0007669"/>
    <property type="project" value="TreeGrafter"/>
</dbReference>
<dbReference type="GO" id="GO:0051537">
    <property type="term" value="F:2 iron, 2 sulfur cluster binding"/>
    <property type="evidence" value="ECO:0007669"/>
    <property type="project" value="TreeGrafter"/>
</dbReference>
<dbReference type="GO" id="GO:0051539">
    <property type="term" value="F:4 iron, 4 sulfur cluster binding"/>
    <property type="evidence" value="ECO:0007669"/>
    <property type="project" value="TreeGrafter"/>
</dbReference>
<dbReference type="GO" id="GO:0005506">
    <property type="term" value="F:iron ion binding"/>
    <property type="evidence" value="ECO:0007669"/>
    <property type="project" value="UniProtKB-UniRule"/>
</dbReference>
<dbReference type="GO" id="GO:0016226">
    <property type="term" value="P:iron-sulfur cluster assembly"/>
    <property type="evidence" value="ECO:0007669"/>
    <property type="project" value="UniProtKB-UniRule"/>
</dbReference>
<dbReference type="FunFam" id="2.60.300.12:FF:000002">
    <property type="entry name" value="Iron-sulfur cluster insertion protein ErpA"/>
    <property type="match status" value="1"/>
</dbReference>
<dbReference type="Gene3D" id="2.60.300.12">
    <property type="entry name" value="HesB-like domain"/>
    <property type="match status" value="1"/>
</dbReference>
<dbReference type="HAMAP" id="MF_01380">
    <property type="entry name" value="Fe_S_insert_ErpA"/>
    <property type="match status" value="1"/>
</dbReference>
<dbReference type="InterPro" id="IPR000361">
    <property type="entry name" value="FeS_biogenesis"/>
</dbReference>
<dbReference type="InterPro" id="IPR016092">
    <property type="entry name" value="FeS_cluster_insertion"/>
</dbReference>
<dbReference type="InterPro" id="IPR017870">
    <property type="entry name" value="FeS_cluster_insertion_CS"/>
</dbReference>
<dbReference type="InterPro" id="IPR023063">
    <property type="entry name" value="FeS_cluster_insertion_RrpA"/>
</dbReference>
<dbReference type="InterPro" id="IPR035903">
    <property type="entry name" value="HesB-like_dom_sf"/>
</dbReference>
<dbReference type="NCBIfam" id="TIGR00049">
    <property type="entry name" value="iron-sulfur cluster assembly accessory protein"/>
    <property type="match status" value="1"/>
</dbReference>
<dbReference type="NCBIfam" id="NF010147">
    <property type="entry name" value="PRK13623.1"/>
    <property type="match status" value="1"/>
</dbReference>
<dbReference type="PANTHER" id="PTHR43011">
    <property type="entry name" value="IRON-SULFUR CLUSTER ASSEMBLY 2 HOMOLOG, MITOCHONDRIAL"/>
    <property type="match status" value="1"/>
</dbReference>
<dbReference type="PANTHER" id="PTHR43011:SF1">
    <property type="entry name" value="IRON-SULFUR CLUSTER ASSEMBLY 2 HOMOLOG, MITOCHONDRIAL"/>
    <property type="match status" value="1"/>
</dbReference>
<dbReference type="Pfam" id="PF01521">
    <property type="entry name" value="Fe-S_biosyn"/>
    <property type="match status" value="1"/>
</dbReference>
<dbReference type="SUPFAM" id="SSF89360">
    <property type="entry name" value="HesB-like domain"/>
    <property type="match status" value="1"/>
</dbReference>
<dbReference type="PROSITE" id="PS01152">
    <property type="entry name" value="HESB"/>
    <property type="match status" value="1"/>
</dbReference>
<keyword id="KW-0408">Iron</keyword>
<keyword id="KW-0411">Iron-sulfur</keyword>
<keyword id="KW-0479">Metal-binding</keyword>
<accession>B5Z0D6</accession>
<evidence type="ECO:0000255" key="1">
    <source>
        <dbReference type="HAMAP-Rule" id="MF_01380"/>
    </source>
</evidence>
<protein>
    <recommendedName>
        <fullName evidence="1">Iron-sulfur cluster insertion protein ErpA</fullName>
    </recommendedName>
</protein>
<comment type="function">
    <text evidence="1">Required for insertion of 4Fe-4S clusters for at least IspG.</text>
</comment>
<comment type="cofactor">
    <cofactor evidence="1">
        <name>iron-sulfur cluster</name>
        <dbReference type="ChEBI" id="CHEBI:30408"/>
    </cofactor>
    <text evidence="1">Binds 1 iron-sulfur cluster per subunit.</text>
</comment>
<comment type="subunit">
    <text evidence="1">Homodimer.</text>
</comment>
<comment type="similarity">
    <text evidence="1">Belongs to the HesB/IscA family.</text>
</comment>
<organism>
    <name type="scientific">Escherichia coli O157:H7 (strain EC4115 / EHEC)</name>
    <dbReference type="NCBI Taxonomy" id="444450"/>
    <lineage>
        <taxon>Bacteria</taxon>
        <taxon>Pseudomonadati</taxon>
        <taxon>Pseudomonadota</taxon>
        <taxon>Gammaproteobacteria</taxon>
        <taxon>Enterobacterales</taxon>
        <taxon>Enterobacteriaceae</taxon>
        <taxon>Escherichia</taxon>
    </lineage>
</organism>
<proteinExistence type="inferred from homology"/>
<gene>
    <name evidence="1" type="primary">erpA</name>
    <name type="ordered locus">ECH74115_0166</name>
</gene>
<reference key="1">
    <citation type="journal article" date="2011" name="Proc. Natl. Acad. Sci. U.S.A.">
        <title>Genomic anatomy of Escherichia coli O157:H7 outbreaks.</title>
        <authorList>
            <person name="Eppinger M."/>
            <person name="Mammel M.K."/>
            <person name="Leclerc J.E."/>
            <person name="Ravel J."/>
            <person name="Cebula T.A."/>
        </authorList>
    </citation>
    <scope>NUCLEOTIDE SEQUENCE [LARGE SCALE GENOMIC DNA]</scope>
    <source>
        <strain>EC4115 / EHEC</strain>
    </source>
</reference>
<name>ERPA_ECO5E</name>